<protein>
    <recommendedName>
        <fullName evidence="1">Proline--tRNA ligase</fullName>
        <ecNumber evidence="1">6.1.1.15</ecNumber>
    </recommendedName>
    <alternativeName>
        <fullName evidence="1">Prolyl-tRNA synthetase</fullName>
        <shortName evidence="1">ProRS</shortName>
    </alternativeName>
</protein>
<organism>
    <name type="scientific">Kocuria rhizophila (strain ATCC 9341 / DSM 348 / NBRC 103217 / DC2201)</name>
    <dbReference type="NCBI Taxonomy" id="378753"/>
    <lineage>
        <taxon>Bacteria</taxon>
        <taxon>Bacillati</taxon>
        <taxon>Actinomycetota</taxon>
        <taxon>Actinomycetes</taxon>
        <taxon>Micrococcales</taxon>
        <taxon>Micrococcaceae</taxon>
        <taxon>Kocuria</taxon>
    </lineage>
</organism>
<proteinExistence type="inferred from homology"/>
<keyword id="KW-0030">Aminoacyl-tRNA synthetase</keyword>
<keyword id="KW-0067">ATP-binding</keyword>
<keyword id="KW-0963">Cytoplasm</keyword>
<keyword id="KW-0436">Ligase</keyword>
<keyword id="KW-0547">Nucleotide-binding</keyword>
<keyword id="KW-0648">Protein biosynthesis</keyword>
<keyword id="KW-1185">Reference proteome</keyword>
<accession>B2GKS1</accession>
<dbReference type="EC" id="6.1.1.15" evidence="1"/>
<dbReference type="EMBL" id="AP009152">
    <property type="protein sequence ID" value="BAG29957.1"/>
    <property type="molecule type" value="Genomic_DNA"/>
</dbReference>
<dbReference type="RefSeq" id="WP_012398678.1">
    <property type="nucleotide sequence ID" value="NC_010617.1"/>
</dbReference>
<dbReference type="SMR" id="B2GKS1"/>
<dbReference type="STRING" id="378753.KRH_16100"/>
<dbReference type="KEGG" id="krh:KRH_16100"/>
<dbReference type="eggNOG" id="COG0442">
    <property type="taxonomic scope" value="Bacteria"/>
</dbReference>
<dbReference type="HOGENOM" id="CLU_016739_0_0_11"/>
<dbReference type="OrthoDB" id="9809052at2"/>
<dbReference type="Proteomes" id="UP000008838">
    <property type="component" value="Chromosome"/>
</dbReference>
<dbReference type="GO" id="GO:0005829">
    <property type="term" value="C:cytosol"/>
    <property type="evidence" value="ECO:0007669"/>
    <property type="project" value="TreeGrafter"/>
</dbReference>
<dbReference type="GO" id="GO:0002161">
    <property type="term" value="F:aminoacyl-tRNA deacylase activity"/>
    <property type="evidence" value="ECO:0007669"/>
    <property type="project" value="InterPro"/>
</dbReference>
<dbReference type="GO" id="GO:0005524">
    <property type="term" value="F:ATP binding"/>
    <property type="evidence" value="ECO:0007669"/>
    <property type="project" value="UniProtKB-UniRule"/>
</dbReference>
<dbReference type="GO" id="GO:0004827">
    <property type="term" value="F:proline-tRNA ligase activity"/>
    <property type="evidence" value="ECO:0007669"/>
    <property type="project" value="UniProtKB-UniRule"/>
</dbReference>
<dbReference type="GO" id="GO:0006433">
    <property type="term" value="P:prolyl-tRNA aminoacylation"/>
    <property type="evidence" value="ECO:0007669"/>
    <property type="project" value="UniProtKB-UniRule"/>
</dbReference>
<dbReference type="CDD" id="cd00861">
    <property type="entry name" value="ProRS_anticodon_short"/>
    <property type="match status" value="1"/>
</dbReference>
<dbReference type="CDD" id="cd00779">
    <property type="entry name" value="ProRS_core_prok"/>
    <property type="match status" value="1"/>
</dbReference>
<dbReference type="FunFam" id="3.30.930.10:FF:000065">
    <property type="entry name" value="Proline--tRNA ligase"/>
    <property type="match status" value="1"/>
</dbReference>
<dbReference type="FunFam" id="3.30.930.10:FF:000066">
    <property type="entry name" value="Proline--tRNA ligase"/>
    <property type="match status" value="1"/>
</dbReference>
<dbReference type="Gene3D" id="3.40.50.800">
    <property type="entry name" value="Anticodon-binding domain"/>
    <property type="match status" value="1"/>
</dbReference>
<dbReference type="Gene3D" id="3.30.930.10">
    <property type="entry name" value="Bira Bifunctional Protein, Domain 2"/>
    <property type="match status" value="2"/>
</dbReference>
<dbReference type="HAMAP" id="MF_01569">
    <property type="entry name" value="Pro_tRNA_synth_type1"/>
    <property type="match status" value="1"/>
</dbReference>
<dbReference type="InterPro" id="IPR002314">
    <property type="entry name" value="aa-tRNA-synt_IIb"/>
</dbReference>
<dbReference type="InterPro" id="IPR006195">
    <property type="entry name" value="aa-tRNA-synth_II"/>
</dbReference>
<dbReference type="InterPro" id="IPR045864">
    <property type="entry name" value="aa-tRNA-synth_II/BPL/LPL"/>
</dbReference>
<dbReference type="InterPro" id="IPR004154">
    <property type="entry name" value="Anticodon-bd"/>
</dbReference>
<dbReference type="InterPro" id="IPR036621">
    <property type="entry name" value="Anticodon-bd_dom_sf"/>
</dbReference>
<dbReference type="InterPro" id="IPR002316">
    <property type="entry name" value="Pro-tRNA-ligase_IIa"/>
</dbReference>
<dbReference type="InterPro" id="IPR004500">
    <property type="entry name" value="Pro-tRNA-synth_IIa_bac-type"/>
</dbReference>
<dbReference type="InterPro" id="IPR023717">
    <property type="entry name" value="Pro-tRNA-Synthase_IIa_type1"/>
</dbReference>
<dbReference type="InterPro" id="IPR050062">
    <property type="entry name" value="Pro-tRNA_synthetase"/>
</dbReference>
<dbReference type="InterPro" id="IPR044140">
    <property type="entry name" value="ProRS_anticodon_short"/>
</dbReference>
<dbReference type="InterPro" id="IPR033730">
    <property type="entry name" value="ProRS_core_prok"/>
</dbReference>
<dbReference type="InterPro" id="IPR036754">
    <property type="entry name" value="YbaK/aa-tRNA-synt-asso_dom_sf"/>
</dbReference>
<dbReference type="InterPro" id="IPR007214">
    <property type="entry name" value="YbaK/aa-tRNA-synth-assoc-dom"/>
</dbReference>
<dbReference type="NCBIfam" id="NF006625">
    <property type="entry name" value="PRK09194.1"/>
    <property type="match status" value="1"/>
</dbReference>
<dbReference type="NCBIfam" id="TIGR00409">
    <property type="entry name" value="proS_fam_II"/>
    <property type="match status" value="1"/>
</dbReference>
<dbReference type="PANTHER" id="PTHR42753">
    <property type="entry name" value="MITOCHONDRIAL RIBOSOME PROTEIN L39/PROLYL-TRNA LIGASE FAMILY MEMBER"/>
    <property type="match status" value="1"/>
</dbReference>
<dbReference type="PANTHER" id="PTHR42753:SF2">
    <property type="entry name" value="PROLINE--TRNA LIGASE"/>
    <property type="match status" value="1"/>
</dbReference>
<dbReference type="Pfam" id="PF03129">
    <property type="entry name" value="HGTP_anticodon"/>
    <property type="match status" value="1"/>
</dbReference>
<dbReference type="Pfam" id="PF00587">
    <property type="entry name" value="tRNA-synt_2b"/>
    <property type="match status" value="1"/>
</dbReference>
<dbReference type="Pfam" id="PF04073">
    <property type="entry name" value="tRNA_edit"/>
    <property type="match status" value="1"/>
</dbReference>
<dbReference type="PRINTS" id="PR01046">
    <property type="entry name" value="TRNASYNTHPRO"/>
</dbReference>
<dbReference type="SUPFAM" id="SSF52954">
    <property type="entry name" value="Class II aaRS ABD-related"/>
    <property type="match status" value="1"/>
</dbReference>
<dbReference type="SUPFAM" id="SSF55681">
    <property type="entry name" value="Class II aaRS and biotin synthetases"/>
    <property type="match status" value="1"/>
</dbReference>
<dbReference type="SUPFAM" id="SSF55826">
    <property type="entry name" value="YbaK/ProRS associated domain"/>
    <property type="match status" value="1"/>
</dbReference>
<dbReference type="PROSITE" id="PS50862">
    <property type="entry name" value="AA_TRNA_LIGASE_II"/>
    <property type="match status" value="1"/>
</dbReference>
<reference key="1">
    <citation type="journal article" date="2008" name="J. Bacteriol.">
        <title>Complete genome sequence of the soil actinomycete Kocuria rhizophila.</title>
        <authorList>
            <person name="Takarada H."/>
            <person name="Sekine M."/>
            <person name="Kosugi H."/>
            <person name="Matsuo Y."/>
            <person name="Fujisawa T."/>
            <person name="Omata S."/>
            <person name="Kishi E."/>
            <person name="Shimizu A."/>
            <person name="Tsukatani N."/>
            <person name="Tanikawa S."/>
            <person name="Fujita N."/>
            <person name="Harayama S."/>
        </authorList>
    </citation>
    <scope>NUCLEOTIDE SEQUENCE [LARGE SCALE GENOMIC DNA]</scope>
    <source>
        <strain>ATCC 9341 / DSM 348 / NBRC 103217 / DC2201</strain>
    </source>
</reference>
<feature type="chain" id="PRO_1000199398" description="Proline--tRNA ligase">
    <location>
        <begin position="1"/>
        <end position="606"/>
    </location>
</feature>
<comment type="function">
    <text evidence="1">Catalyzes the attachment of proline to tRNA(Pro) in a two-step reaction: proline is first activated by ATP to form Pro-AMP and then transferred to the acceptor end of tRNA(Pro). As ProRS can inadvertently accommodate and process non-cognate amino acids such as alanine and cysteine, to avoid such errors it has two additional distinct editing activities against alanine. One activity is designated as 'pretransfer' editing and involves the tRNA(Pro)-independent hydrolysis of activated Ala-AMP. The other activity is designated 'posttransfer' editing and involves deacylation of mischarged Ala-tRNA(Pro). The misacylated Cys-tRNA(Pro) is not edited by ProRS.</text>
</comment>
<comment type="catalytic activity">
    <reaction evidence="1">
        <text>tRNA(Pro) + L-proline + ATP = L-prolyl-tRNA(Pro) + AMP + diphosphate</text>
        <dbReference type="Rhea" id="RHEA:14305"/>
        <dbReference type="Rhea" id="RHEA-COMP:9700"/>
        <dbReference type="Rhea" id="RHEA-COMP:9702"/>
        <dbReference type="ChEBI" id="CHEBI:30616"/>
        <dbReference type="ChEBI" id="CHEBI:33019"/>
        <dbReference type="ChEBI" id="CHEBI:60039"/>
        <dbReference type="ChEBI" id="CHEBI:78442"/>
        <dbReference type="ChEBI" id="CHEBI:78532"/>
        <dbReference type="ChEBI" id="CHEBI:456215"/>
        <dbReference type="EC" id="6.1.1.15"/>
    </reaction>
</comment>
<comment type="subunit">
    <text evidence="1">Homodimer.</text>
</comment>
<comment type="subcellular location">
    <subcellularLocation>
        <location evidence="1">Cytoplasm</location>
    </subcellularLocation>
</comment>
<comment type="domain">
    <text evidence="1">Consists of three domains: the N-terminal catalytic domain, the editing domain and the C-terminal anticodon-binding domain.</text>
</comment>
<comment type="similarity">
    <text evidence="1">Belongs to the class-II aminoacyl-tRNA synthetase family. ProS type 1 subfamily.</text>
</comment>
<gene>
    <name evidence="1" type="primary">proS</name>
    <name type="ordered locus">KRH_16100</name>
</gene>
<evidence type="ECO:0000255" key="1">
    <source>
        <dbReference type="HAMAP-Rule" id="MF_01569"/>
    </source>
</evidence>
<name>SYP_KOCRD</name>
<sequence length="606" mass="65715">MPLRLSSLFLRTLREDPVDADVDSHKLLVRAGYIRRAAPGIYTWLPLGLAVLRRVEGIVREEMDAIGAQEVHFPALLPREPYEASNRWTEYGENLFRLQDRKGADYLLAPTHEEMFTLLVKDMYSSYKDLPVMLYQIQTKYRDEARPRAGLLRGREFIMKDSYSFDVDDAGLDDAYAKHRAAYVRIFERLGLPVVAVSATSGAMGGSRSEEFMHPSVVGEDTFVRSAGGYAANVEAVTTVVPEPVDCTDAPAAQVHRTPDSPTIDTLVSRSNELHPREGQPWTAADTLKNVLLSVSLPEGGTQLVAVGVPGDREIDLKRVEAGIGGALGIGGELEVEAASEEQLRAVPELVKGYIGPGLSREDALLGTESPTGIPYFVDPRVVPGTRWITGANVAEAHVYDLVAERDFTWDATLEACTVREGDPAPDGSGPLEIARGMEMGHVFQLGRKYAEALGLKVLDNNGKLVTVTMGSYGIGVTRALAAVAEFYHDEHGLLWPRNLSPADVHVVATGKGPEVLEAAEEIVAHLEAAGVSVLFDDRPKVSPGVKFRDAELLGVPTVLVVGRGLADGVLELKDRRSGTSRDIARDRVVAEITAELQGQEGPAAE</sequence>